<reference key="1">
    <citation type="journal article" date="1999" name="Nature">
        <title>Sequence and analysis of chromosome 4 of the plant Arabidopsis thaliana.</title>
        <authorList>
            <person name="Mayer K.F.X."/>
            <person name="Schueller C."/>
            <person name="Wambutt R."/>
            <person name="Murphy G."/>
            <person name="Volckaert G."/>
            <person name="Pohl T."/>
            <person name="Duesterhoeft A."/>
            <person name="Stiekema W."/>
            <person name="Entian K.-D."/>
            <person name="Terryn N."/>
            <person name="Harris B."/>
            <person name="Ansorge W."/>
            <person name="Brandt P."/>
            <person name="Grivell L.A."/>
            <person name="Rieger M."/>
            <person name="Weichselgartner M."/>
            <person name="de Simone V."/>
            <person name="Obermaier B."/>
            <person name="Mache R."/>
            <person name="Mueller M."/>
            <person name="Kreis M."/>
            <person name="Delseny M."/>
            <person name="Puigdomenech P."/>
            <person name="Watson M."/>
            <person name="Schmidtheini T."/>
            <person name="Reichert B."/>
            <person name="Portetelle D."/>
            <person name="Perez-Alonso M."/>
            <person name="Boutry M."/>
            <person name="Bancroft I."/>
            <person name="Vos P."/>
            <person name="Hoheisel J."/>
            <person name="Zimmermann W."/>
            <person name="Wedler H."/>
            <person name="Ridley P."/>
            <person name="Langham S.-A."/>
            <person name="McCullagh B."/>
            <person name="Bilham L."/>
            <person name="Robben J."/>
            <person name="van der Schueren J."/>
            <person name="Grymonprez B."/>
            <person name="Chuang Y.-J."/>
            <person name="Vandenbussche F."/>
            <person name="Braeken M."/>
            <person name="Weltjens I."/>
            <person name="Voet M."/>
            <person name="Bastiaens I."/>
            <person name="Aert R."/>
            <person name="Defoor E."/>
            <person name="Weitzenegger T."/>
            <person name="Bothe G."/>
            <person name="Ramsperger U."/>
            <person name="Hilbert H."/>
            <person name="Braun M."/>
            <person name="Holzer E."/>
            <person name="Brandt A."/>
            <person name="Peters S."/>
            <person name="van Staveren M."/>
            <person name="Dirkse W."/>
            <person name="Mooijman P."/>
            <person name="Klein Lankhorst R."/>
            <person name="Rose M."/>
            <person name="Hauf J."/>
            <person name="Koetter P."/>
            <person name="Berneiser S."/>
            <person name="Hempel S."/>
            <person name="Feldpausch M."/>
            <person name="Lamberth S."/>
            <person name="Van den Daele H."/>
            <person name="De Keyser A."/>
            <person name="Buysshaert C."/>
            <person name="Gielen J."/>
            <person name="Villarroel R."/>
            <person name="De Clercq R."/>
            <person name="van Montagu M."/>
            <person name="Rogers J."/>
            <person name="Cronin A."/>
            <person name="Quail M.A."/>
            <person name="Bray-Allen S."/>
            <person name="Clark L."/>
            <person name="Doggett J."/>
            <person name="Hall S."/>
            <person name="Kay M."/>
            <person name="Lennard N."/>
            <person name="McLay K."/>
            <person name="Mayes R."/>
            <person name="Pettett A."/>
            <person name="Rajandream M.A."/>
            <person name="Lyne M."/>
            <person name="Benes V."/>
            <person name="Rechmann S."/>
            <person name="Borkova D."/>
            <person name="Bloecker H."/>
            <person name="Scharfe M."/>
            <person name="Grimm M."/>
            <person name="Loehnert T.-H."/>
            <person name="Dose S."/>
            <person name="de Haan M."/>
            <person name="Maarse A.C."/>
            <person name="Schaefer M."/>
            <person name="Mueller-Auer S."/>
            <person name="Gabel C."/>
            <person name="Fuchs M."/>
            <person name="Fartmann B."/>
            <person name="Granderath K."/>
            <person name="Dauner D."/>
            <person name="Herzl A."/>
            <person name="Neumann S."/>
            <person name="Argiriou A."/>
            <person name="Vitale D."/>
            <person name="Liguori R."/>
            <person name="Piravandi E."/>
            <person name="Massenet O."/>
            <person name="Quigley F."/>
            <person name="Clabauld G."/>
            <person name="Muendlein A."/>
            <person name="Felber R."/>
            <person name="Schnabl S."/>
            <person name="Hiller R."/>
            <person name="Schmidt W."/>
            <person name="Lecharny A."/>
            <person name="Aubourg S."/>
            <person name="Chefdor F."/>
            <person name="Cooke R."/>
            <person name="Berger C."/>
            <person name="Monfort A."/>
            <person name="Casacuberta E."/>
            <person name="Gibbons T."/>
            <person name="Weber N."/>
            <person name="Vandenbol M."/>
            <person name="Bargues M."/>
            <person name="Terol J."/>
            <person name="Torres A."/>
            <person name="Perez-Perez A."/>
            <person name="Purnelle B."/>
            <person name="Bent E."/>
            <person name="Johnson S."/>
            <person name="Tacon D."/>
            <person name="Jesse T."/>
            <person name="Heijnen L."/>
            <person name="Schwarz S."/>
            <person name="Scholler P."/>
            <person name="Heber S."/>
            <person name="Francs P."/>
            <person name="Bielke C."/>
            <person name="Frishman D."/>
            <person name="Haase D."/>
            <person name="Lemcke K."/>
            <person name="Mewes H.-W."/>
            <person name="Stocker S."/>
            <person name="Zaccaria P."/>
            <person name="Bevan M."/>
            <person name="Wilson R.K."/>
            <person name="de la Bastide M."/>
            <person name="Habermann K."/>
            <person name="Parnell L."/>
            <person name="Dedhia N."/>
            <person name="Gnoj L."/>
            <person name="Schutz K."/>
            <person name="Huang E."/>
            <person name="Spiegel L."/>
            <person name="Sekhon M."/>
            <person name="Murray J."/>
            <person name="Sheet P."/>
            <person name="Cordes M."/>
            <person name="Abu-Threideh J."/>
            <person name="Stoneking T."/>
            <person name="Kalicki J."/>
            <person name="Graves T."/>
            <person name="Harmon G."/>
            <person name="Edwards J."/>
            <person name="Latreille P."/>
            <person name="Courtney L."/>
            <person name="Cloud J."/>
            <person name="Abbott A."/>
            <person name="Scott K."/>
            <person name="Johnson D."/>
            <person name="Minx P."/>
            <person name="Bentley D."/>
            <person name="Fulton B."/>
            <person name="Miller N."/>
            <person name="Greco T."/>
            <person name="Kemp K."/>
            <person name="Kramer J."/>
            <person name="Fulton L."/>
            <person name="Mardis E."/>
            <person name="Dante M."/>
            <person name="Pepin K."/>
            <person name="Hillier L.W."/>
            <person name="Nelson J."/>
            <person name="Spieth J."/>
            <person name="Ryan E."/>
            <person name="Andrews S."/>
            <person name="Geisel C."/>
            <person name="Layman D."/>
            <person name="Du H."/>
            <person name="Ali J."/>
            <person name="Berghoff A."/>
            <person name="Jones K."/>
            <person name="Drone K."/>
            <person name="Cotton M."/>
            <person name="Joshu C."/>
            <person name="Antonoiu B."/>
            <person name="Zidanic M."/>
            <person name="Strong C."/>
            <person name="Sun H."/>
            <person name="Lamar B."/>
            <person name="Yordan C."/>
            <person name="Ma P."/>
            <person name="Zhong J."/>
            <person name="Preston R."/>
            <person name="Vil D."/>
            <person name="Shekher M."/>
            <person name="Matero A."/>
            <person name="Shah R."/>
            <person name="Swaby I.K."/>
            <person name="O'Shaughnessy A."/>
            <person name="Rodriguez M."/>
            <person name="Hoffman J."/>
            <person name="Till S."/>
            <person name="Granat S."/>
            <person name="Shohdy N."/>
            <person name="Hasegawa A."/>
            <person name="Hameed A."/>
            <person name="Lodhi M."/>
            <person name="Johnson A."/>
            <person name="Chen E."/>
            <person name="Marra M.A."/>
            <person name="Martienssen R."/>
            <person name="McCombie W.R."/>
        </authorList>
    </citation>
    <scope>NUCLEOTIDE SEQUENCE [LARGE SCALE GENOMIC DNA]</scope>
    <source>
        <strain>cv. Columbia</strain>
    </source>
</reference>
<reference key="2">
    <citation type="journal article" date="2017" name="Plant J.">
        <title>Araport11: a complete reannotation of the Arabidopsis thaliana reference genome.</title>
        <authorList>
            <person name="Cheng C.Y."/>
            <person name="Krishnakumar V."/>
            <person name="Chan A.P."/>
            <person name="Thibaud-Nissen F."/>
            <person name="Schobel S."/>
            <person name="Town C.D."/>
        </authorList>
    </citation>
    <scope>GENOME REANNOTATION</scope>
    <source>
        <strain>cv. Columbia</strain>
    </source>
</reference>
<reference key="3">
    <citation type="journal article" date="2004" name="Plant Cell">
        <title>Genome-wide analysis of Arabidopsis pentatricopeptide repeat proteins reveals their essential role in organelle biogenesis.</title>
        <authorList>
            <person name="Lurin C."/>
            <person name="Andres C."/>
            <person name="Aubourg S."/>
            <person name="Bellaoui M."/>
            <person name="Bitton F."/>
            <person name="Bruyere C."/>
            <person name="Caboche M."/>
            <person name="Debast C."/>
            <person name="Gualberto J."/>
            <person name="Hoffmann B."/>
            <person name="Lecharny A."/>
            <person name="Le Ret M."/>
            <person name="Martin-Magniette M.-L."/>
            <person name="Mireau H."/>
            <person name="Peeters N."/>
            <person name="Renou J.-P."/>
            <person name="Szurek B."/>
            <person name="Taconnat L."/>
            <person name="Small I."/>
        </authorList>
    </citation>
    <scope>GENE FAMILY</scope>
</reference>
<proteinExistence type="evidence at transcript level"/>
<organism>
    <name type="scientific">Arabidopsis thaliana</name>
    <name type="common">Mouse-ear cress</name>
    <dbReference type="NCBI Taxonomy" id="3702"/>
    <lineage>
        <taxon>Eukaryota</taxon>
        <taxon>Viridiplantae</taxon>
        <taxon>Streptophyta</taxon>
        <taxon>Embryophyta</taxon>
        <taxon>Tracheophyta</taxon>
        <taxon>Spermatophyta</taxon>
        <taxon>Magnoliopsida</taxon>
        <taxon>eudicotyledons</taxon>
        <taxon>Gunneridae</taxon>
        <taxon>Pentapetalae</taxon>
        <taxon>rosids</taxon>
        <taxon>malvids</taxon>
        <taxon>Brassicales</taxon>
        <taxon>Brassicaceae</taxon>
        <taxon>Camelineae</taxon>
        <taxon>Arabidopsis</taxon>
    </lineage>
</organism>
<comment type="subcellular location">
    <subcellularLocation>
        <location evidence="3">Plastid</location>
        <location evidence="3">Chloroplast</location>
    </subcellularLocation>
</comment>
<comment type="similarity">
    <text evidence="3">Belongs to the PPR family. P subfamily.</text>
</comment>
<comment type="sequence caution" evidence="3">
    <conflict type="erroneous gene model prediction">
        <sequence resource="EMBL-CDS" id="CAA18211"/>
    </conflict>
</comment>
<comment type="sequence caution" evidence="3">
    <conflict type="erroneous gene model prediction">
        <sequence resource="EMBL-CDS" id="CAB79800"/>
    </conflict>
</comment>
<comment type="online information" name="Pentatricopeptide repeat proteins">
    <link uri="https://ppr.plantenergy.uwa.edu.au"/>
</comment>
<dbReference type="EMBL" id="AL022198">
    <property type="protein sequence ID" value="CAA18211.1"/>
    <property type="status" value="ALT_SEQ"/>
    <property type="molecule type" value="Genomic_DNA"/>
</dbReference>
<dbReference type="EMBL" id="AL109787">
    <property type="status" value="NOT_ANNOTATED_CDS"/>
    <property type="molecule type" value="Genomic_DNA"/>
</dbReference>
<dbReference type="EMBL" id="AL161577">
    <property type="protein sequence ID" value="CAB79800.1"/>
    <property type="status" value="ALT_SEQ"/>
    <property type="molecule type" value="Genomic_DNA"/>
</dbReference>
<dbReference type="EMBL" id="CP002687">
    <property type="protein sequence ID" value="AEE85815.1"/>
    <property type="molecule type" value="Genomic_DNA"/>
</dbReference>
<dbReference type="PIR" id="G85360">
    <property type="entry name" value="G85360"/>
</dbReference>
<dbReference type="RefSeq" id="NP_567856.1">
    <property type="nucleotide sequence ID" value="NM_119229.2"/>
</dbReference>
<dbReference type="SMR" id="O65567"/>
<dbReference type="FunCoup" id="O65567">
    <property type="interactions" value="1457"/>
</dbReference>
<dbReference type="IntAct" id="O65567">
    <property type="interactions" value="8"/>
</dbReference>
<dbReference type="STRING" id="3702.O65567"/>
<dbReference type="PaxDb" id="3702-AT4G30825.1"/>
<dbReference type="ProteomicsDB" id="249240"/>
<dbReference type="EnsemblPlants" id="AT4G30825.1">
    <property type="protein sequence ID" value="AT4G30825.1"/>
    <property type="gene ID" value="AT4G30825"/>
</dbReference>
<dbReference type="GeneID" id="829206"/>
<dbReference type="Gramene" id="AT4G30825.1">
    <property type="protein sequence ID" value="AT4G30825.1"/>
    <property type="gene ID" value="AT4G30825"/>
</dbReference>
<dbReference type="KEGG" id="ath:AT4G30825"/>
<dbReference type="Araport" id="AT4G30825"/>
<dbReference type="TAIR" id="AT4G30825">
    <property type="gene designation" value="BFA2"/>
</dbReference>
<dbReference type="eggNOG" id="KOG3800">
    <property type="taxonomic scope" value="Eukaryota"/>
</dbReference>
<dbReference type="eggNOG" id="KOG4197">
    <property type="taxonomic scope" value="Eukaryota"/>
</dbReference>
<dbReference type="HOGENOM" id="CLU_011764_0_0_1"/>
<dbReference type="InParanoid" id="O65567"/>
<dbReference type="OMA" id="DVFSIME"/>
<dbReference type="PhylomeDB" id="O65567"/>
<dbReference type="PRO" id="PR:O65567"/>
<dbReference type="Proteomes" id="UP000006548">
    <property type="component" value="Chromosome 4"/>
</dbReference>
<dbReference type="ExpressionAtlas" id="O65567">
    <property type="expression patterns" value="baseline and differential"/>
</dbReference>
<dbReference type="GO" id="GO:0009570">
    <property type="term" value="C:chloroplast stroma"/>
    <property type="evidence" value="ECO:0000314"/>
    <property type="project" value="TAIR"/>
</dbReference>
<dbReference type="GO" id="GO:0003677">
    <property type="term" value="F:DNA binding"/>
    <property type="evidence" value="ECO:0000314"/>
    <property type="project" value="TAIR"/>
</dbReference>
<dbReference type="GO" id="GO:0003729">
    <property type="term" value="F:mRNA binding"/>
    <property type="evidence" value="ECO:0000314"/>
    <property type="project" value="TAIR"/>
</dbReference>
<dbReference type="FunFam" id="1.25.40.10:FF:003613">
    <property type="entry name" value="Pentatricopeptide repeat-containing protein At3g23020"/>
    <property type="match status" value="1"/>
</dbReference>
<dbReference type="FunFam" id="1.25.40.10:FF:001780">
    <property type="entry name" value="Pentatricopeptide repeat-containing protein At4g30825, chloroplastic"/>
    <property type="match status" value="1"/>
</dbReference>
<dbReference type="Gene3D" id="1.25.40.10">
    <property type="entry name" value="Tetratricopeptide repeat domain"/>
    <property type="match status" value="6"/>
</dbReference>
<dbReference type="InterPro" id="IPR002885">
    <property type="entry name" value="Pentatricopeptide_rpt"/>
</dbReference>
<dbReference type="InterPro" id="IPR011990">
    <property type="entry name" value="TPR-like_helical_dom_sf"/>
</dbReference>
<dbReference type="NCBIfam" id="TIGR00756">
    <property type="entry name" value="PPR"/>
    <property type="match status" value="10"/>
</dbReference>
<dbReference type="PANTHER" id="PTHR47447">
    <property type="entry name" value="OS03G0856100 PROTEIN"/>
    <property type="match status" value="1"/>
</dbReference>
<dbReference type="PANTHER" id="PTHR47447:SF17">
    <property type="entry name" value="OS12G0638900 PROTEIN"/>
    <property type="match status" value="1"/>
</dbReference>
<dbReference type="Pfam" id="PF01535">
    <property type="entry name" value="PPR"/>
    <property type="match status" value="6"/>
</dbReference>
<dbReference type="Pfam" id="PF13041">
    <property type="entry name" value="PPR_2"/>
    <property type="match status" value="4"/>
</dbReference>
<dbReference type="Pfam" id="PF13812">
    <property type="entry name" value="PPR_3"/>
    <property type="match status" value="1"/>
</dbReference>
<dbReference type="SUPFAM" id="SSF81901">
    <property type="entry name" value="HCP-like"/>
    <property type="match status" value="2"/>
</dbReference>
<dbReference type="PROSITE" id="PS51375">
    <property type="entry name" value="PPR"/>
    <property type="match status" value="20"/>
</dbReference>
<feature type="transit peptide" description="Chloroplast" evidence="1">
    <location>
        <begin position="1"/>
        <end position="61"/>
    </location>
</feature>
<feature type="chain" id="PRO_0000363459" description="Pentatricopeptide repeat-containing protein At4g30825, chloroplastic">
    <location>
        <begin position="62"/>
        <end position="904"/>
    </location>
</feature>
<feature type="repeat" description="PPR 1">
    <location>
        <begin position="173"/>
        <end position="203"/>
    </location>
</feature>
<feature type="repeat" description="PPR 2">
    <location>
        <begin position="209"/>
        <end position="243"/>
    </location>
</feature>
<feature type="repeat" description="PPR 3">
    <location>
        <begin position="244"/>
        <end position="274"/>
    </location>
</feature>
<feature type="repeat" description="PPR 4">
    <location>
        <begin position="278"/>
        <end position="312"/>
    </location>
</feature>
<feature type="repeat" description="PPR 5">
    <location>
        <begin position="313"/>
        <end position="347"/>
    </location>
</feature>
<feature type="repeat" description="PPR 6">
    <location>
        <begin position="348"/>
        <end position="382"/>
    </location>
</feature>
<feature type="repeat" description="PPR 7">
    <location>
        <begin position="383"/>
        <end position="417"/>
    </location>
</feature>
<feature type="repeat" description="PPR 8">
    <location>
        <begin position="418"/>
        <end position="452"/>
    </location>
</feature>
<feature type="repeat" description="PPR 9">
    <location>
        <begin position="487"/>
        <end position="521"/>
    </location>
</feature>
<feature type="repeat" description="PPR 10">
    <location>
        <begin position="522"/>
        <end position="553"/>
    </location>
</feature>
<feature type="repeat" description="PPR 11">
    <location>
        <begin position="557"/>
        <end position="591"/>
    </location>
</feature>
<feature type="repeat" description="PPR 12">
    <location>
        <begin position="592"/>
        <end position="622"/>
    </location>
</feature>
<feature type="repeat" description="PPR 13">
    <location>
        <begin position="628"/>
        <end position="662"/>
    </location>
</feature>
<feature type="repeat" description="PPR 14">
    <location>
        <begin position="663"/>
        <end position="697"/>
    </location>
</feature>
<feature type="repeat" description="PPR 15">
    <location>
        <begin position="698"/>
        <end position="732"/>
    </location>
</feature>
<feature type="repeat" description="PPR 16">
    <location>
        <begin position="733"/>
        <end position="766"/>
    </location>
</feature>
<feature type="repeat" description="PPR 17">
    <location>
        <begin position="767"/>
        <end position="801"/>
    </location>
</feature>
<feature type="repeat" description="PPR 18">
    <location>
        <begin position="802"/>
        <end position="836"/>
    </location>
</feature>
<feature type="repeat" description="PPR 19">
    <location>
        <begin position="837"/>
        <end position="871"/>
    </location>
</feature>
<feature type="repeat" description="PPR 20">
    <location>
        <begin position="872"/>
        <end position="904"/>
    </location>
</feature>
<feature type="region of interest" description="Disordered" evidence="2">
    <location>
        <begin position="75"/>
        <end position="94"/>
    </location>
</feature>
<protein>
    <recommendedName>
        <fullName>Pentatricopeptide repeat-containing protein At4g30825, chloroplastic</fullName>
    </recommendedName>
</protein>
<keyword id="KW-0150">Chloroplast</keyword>
<keyword id="KW-0934">Plastid</keyword>
<keyword id="KW-1185">Reference proteome</keyword>
<keyword id="KW-0677">Repeat</keyword>
<keyword id="KW-0809">Transit peptide</keyword>
<name>PP342_ARATH</name>
<accession>O65567</accession>
<gene>
    <name type="ordered locus">At4g30825</name>
    <name type="ORF">F6I18.270</name>
    <name type="ORF">T10C21.4</name>
</gene>
<evidence type="ECO:0000255" key="1"/>
<evidence type="ECO:0000256" key="2">
    <source>
        <dbReference type="SAM" id="MobiDB-lite"/>
    </source>
</evidence>
<evidence type="ECO:0000305" key="3"/>
<sequence>MGSLRFSIPLDPFDSKRKRFHFSANPSQFPDQFPIHFVTSSIHATRASSIGSSTRVLDKIRVSSLGTEANENAINSASAAPVERSRSSKLSGDQRGTKKYVARKFSFRRGSNDLELENLFVNNGEIDVNYSAIKPGQSLEHCNGILKRLESCSDTNAIKFFDWMRCNGKLVGNFVAYSLILRVLGRREEWDRAEDLIKELCGFHEFQKSYQVFNTVIYACTKKGNVKLASKWFHMMLEFGVRPNVATIGMLMGLYQKNWNVEEAEFAFSHMRKFGIVCESAYSSMITIYTRLRLYDKAEEVIDLMKQDRVRLKLENWLVMLNAYSQQGKMELAESILVSMEAAGFSPNIIAYNTLITGYGKIFKMEAAQGLFHRLCNIGLEPDETSYRSMIEGWGRADNYEEAKHYYQELKRCGYKPNSFNLFTLINLQAKYGDRDGAIKTIEDMTGIGCQYSSILGIILQAYEKVGKIDVVPCVLKGSFHNHIRLNQTSFSSLVMAYVKHGMVDDCLGLLREKKWRDSAFESHLYHLLICSCKESGQLTDAVKIYNHKMESDEEINLHITSTMIDIYTVMGEFSEAEKLYLNLKSSGVVLDRIGFSIVVRMYVKAGSLEEACSVLEIMDEQKDIVPDVYLFRDMLRIYQKCDLQDKLQHLYYRIRKSGIHWNQEMYNCVINCCARALPLDELSGTFEEMIRYGFTPNTVTFNVLLDVYGKAKLFKKVNELFLLAKRHGVVDVISYNTIIAAYGKNKDYTNMSSAIKNMQFDGFSVSLEAYNTLLDAYGKDKQMEKFRSILKRMKKSTSGPDHYTYNIMINIYGEQGWIDEVADVLKELKESGLGPDLCSYNTLIKAYGIGGMVEEAVGLVKEMRGRNIIPDKVTYTNLVTALRRNDEFLEAIKWSLWMKQMGI</sequence>